<gene>
    <name evidence="1" type="primary">hdfR</name>
    <name type="ordered locus">ECED1_4451</name>
</gene>
<proteinExistence type="inferred from homology"/>
<keyword id="KW-0238">DNA-binding</keyword>
<keyword id="KW-0678">Repressor</keyword>
<keyword id="KW-0804">Transcription</keyword>
<keyword id="KW-0805">Transcription regulation</keyword>
<name>HDFR_ECO81</name>
<evidence type="ECO:0000255" key="1">
    <source>
        <dbReference type="HAMAP-Rule" id="MF_01233"/>
    </source>
</evidence>
<evidence type="ECO:0000305" key="2"/>
<sequence>MDTELLKTFLEVSRTRHFGRAAESLYLTQSAVSFRIRQLENQLGVNLFTRHRNNIRLTAAGEKLLPYAETLMSTWQAARKEVAHTSRHNEFSIGASASLWECMLNQWLGRLYQNQDVHTGLQFEARIAQRQSLVKQLHERQLDLLITTEAPKMDEFCSQLLGYFTLALYTSAPSKLKGDLNYLRLEWGPDFQQHEAGLIGADEVPILTTSSAELAQQQIAMLNGCTWLPVSWARKKGGLHTVVDSTTLSRPLYAIWLQNSDKNALIRDLLKINVLDEVY</sequence>
<comment type="function">
    <text evidence="1">Negatively regulates the transcription of the flagellar master operon flhDC by binding to the upstream region of the operon.</text>
</comment>
<comment type="similarity">
    <text evidence="2">Belongs to the LysR transcriptional regulatory family.</text>
</comment>
<feature type="chain" id="PRO_1000164986" description="HTH-type transcriptional regulator HdfR">
    <location>
        <begin position="1"/>
        <end position="279"/>
    </location>
</feature>
<feature type="domain" description="HTH lysR-type" evidence="1">
    <location>
        <begin position="1"/>
        <end position="58"/>
    </location>
</feature>
<feature type="DNA-binding region" description="H-T-H motif" evidence="1">
    <location>
        <begin position="18"/>
        <end position="37"/>
    </location>
</feature>
<accession>B7N260</accession>
<organism>
    <name type="scientific">Escherichia coli O81 (strain ED1a)</name>
    <dbReference type="NCBI Taxonomy" id="585397"/>
    <lineage>
        <taxon>Bacteria</taxon>
        <taxon>Pseudomonadati</taxon>
        <taxon>Pseudomonadota</taxon>
        <taxon>Gammaproteobacteria</taxon>
        <taxon>Enterobacterales</taxon>
        <taxon>Enterobacteriaceae</taxon>
        <taxon>Escherichia</taxon>
    </lineage>
</organism>
<protein>
    <recommendedName>
        <fullName evidence="1">HTH-type transcriptional regulator HdfR</fullName>
    </recommendedName>
    <alternativeName>
        <fullName evidence="1">H-NS-dependent flhDC regulator</fullName>
    </alternativeName>
</protein>
<dbReference type="EMBL" id="CU928162">
    <property type="protein sequence ID" value="CAR10431.1"/>
    <property type="molecule type" value="Genomic_DNA"/>
</dbReference>
<dbReference type="RefSeq" id="WP_000379257.1">
    <property type="nucleotide sequence ID" value="NC_011745.1"/>
</dbReference>
<dbReference type="SMR" id="B7N260"/>
<dbReference type="KEGG" id="ecq:ECED1_4451"/>
<dbReference type="HOGENOM" id="CLU_039613_8_2_6"/>
<dbReference type="Proteomes" id="UP000000748">
    <property type="component" value="Chromosome"/>
</dbReference>
<dbReference type="GO" id="GO:0003677">
    <property type="term" value="F:DNA binding"/>
    <property type="evidence" value="ECO:0007669"/>
    <property type="project" value="UniProtKB-KW"/>
</dbReference>
<dbReference type="GO" id="GO:0003700">
    <property type="term" value="F:DNA-binding transcription factor activity"/>
    <property type="evidence" value="ECO:0007669"/>
    <property type="project" value="UniProtKB-UniRule"/>
</dbReference>
<dbReference type="GO" id="GO:0045892">
    <property type="term" value="P:negative regulation of DNA-templated transcription"/>
    <property type="evidence" value="ECO:0007669"/>
    <property type="project" value="UniProtKB-UniRule"/>
</dbReference>
<dbReference type="FunFam" id="1.10.10.10:FF:000001">
    <property type="entry name" value="LysR family transcriptional regulator"/>
    <property type="match status" value="1"/>
</dbReference>
<dbReference type="Gene3D" id="3.40.190.10">
    <property type="entry name" value="Periplasmic binding protein-like II"/>
    <property type="match status" value="2"/>
</dbReference>
<dbReference type="Gene3D" id="1.10.10.10">
    <property type="entry name" value="Winged helix-like DNA-binding domain superfamily/Winged helix DNA-binding domain"/>
    <property type="match status" value="1"/>
</dbReference>
<dbReference type="HAMAP" id="MF_01233">
    <property type="entry name" value="HTH_type_HdfR"/>
    <property type="match status" value="1"/>
</dbReference>
<dbReference type="InterPro" id="IPR050176">
    <property type="entry name" value="LTTR"/>
</dbReference>
<dbReference type="InterPro" id="IPR005119">
    <property type="entry name" value="LysR_subst-bd"/>
</dbReference>
<dbReference type="InterPro" id="IPR020890">
    <property type="entry name" value="Tscrpt_reg_HTH_HdfR"/>
</dbReference>
<dbReference type="InterPro" id="IPR000847">
    <property type="entry name" value="Tscrpt_reg_HTH_LysR"/>
</dbReference>
<dbReference type="InterPro" id="IPR036388">
    <property type="entry name" value="WH-like_DNA-bd_sf"/>
</dbReference>
<dbReference type="InterPro" id="IPR036390">
    <property type="entry name" value="WH_DNA-bd_sf"/>
</dbReference>
<dbReference type="NCBIfam" id="NF002946">
    <property type="entry name" value="PRK03601.1"/>
    <property type="match status" value="1"/>
</dbReference>
<dbReference type="PANTHER" id="PTHR30579:SF8">
    <property type="entry name" value="HTH-TYPE TRANSCRIPTIONAL REGULATOR HDFR"/>
    <property type="match status" value="1"/>
</dbReference>
<dbReference type="PANTHER" id="PTHR30579">
    <property type="entry name" value="TRANSCRIPTIONAL REGULATOR"/>
    <property type="match status" value="1"/>
</dbReference>
<dbReference type="Pfam" id="PF00126">
    <property type="entry name" value="HTH_1"/>
    <property type="match status" value="1"/>
</dbReference>
<dbReference type="Pfam" id="PF03466">
    <property type="entry name" value="LysR_substrate"/>
    <property type="match status" value="1"/>
</dbReference>
<dbReference type="PRINTS" id="PR00039">
    <property type="entry name" value="HTHLYSR"/>
</dbReference>
<dbReference type="SUPFAM" id="SSF53850">
    <property type="entry name" value="Periplasmic binding protein-like II"/>
    <property type="match status" value="1"/>
</dbReference>
<dbReference type="SUPFAM" id="SSF46785">
    <property type="entry name" value="Winged helix' DNA-binding domain"/>
    <property type="match status" value="1"/>
</dbReference>
<dbReference type="PROSITE" id="PS50931">
    <property type="entry name" value="HTH_LYSR"/>
    <property type="match status" value="1"/>
</dbReference>
<reference key="1">
    <citation type="journal article" date="2009" name="PLoS Genet.">
        <title>Organised genome dynamics in the Escherichia coli species results in highly diverse adaptive paths.</title>
        <authorList>
            <person name="Touchon M."/>
            <person name="Hoede C."/>
            <person name="Tenaillon O."/>
            <person name="Barbe V."/>
            <person name="Baeriswyl S."/>
            <person name="Bidet P."/>
            <person name="Bingen E."/>
            <person name="Bonacorsi S."/>
            <person name="Bouchier C."/>
            <person name="Bouvet O."/>
            <person name="Calteau A."/>
            <person name="Chiapello H."/>
            <person name="Clermont O."/>
            <person name="Cruveiller S."/>
            <person name="Danchin A."/>
            <person name="Diard M."/>
            <person name="Dossat C."/>
            <person name="Karoui M.E."/>
            <person name="Frapy E."/>
            <person name="Garry L."/>
            <person name="Ghigo J.M."/>
            <person name="Gilles A.M."/>
            <person name="Johnson J."/>
            <person name="Le Bouguenec C."/>
            <person name="Lescat M."/>
            <person name="Mangenot S."/>
            <person name="Martinez-Jehanne V."/>
            <person name="Matic I."/>
            <person name="Nassif X."/>
            <person name="Oztas S."/>
            <person name="Petit M.A."/>
            <person name="Pichon C."/>
            <person name="Rouy Z."/>
            <person name="Ruf C.S."/>
            <person name="Schneider D."/>
            <person name="Tourret J."/>
            <person name="Vacherie B."/>
            <person name="Vallenet D."/>
            <person name="Medigue C."/>
            <person name="Rocha E.P.C."/>
            <person name="Denamur E."/>
        </authorList>
    </citation>
    <scope>NUCLEOTIDE SEQUENCE [LARGE SCALE GENOMIC DNA]</scope>
    <source>
        <strain>ED1a</strain>
    </source>
</reference>